<reference key="1">
    <citation type="journal article" date="2003" name="Nat. Genet.">
        <title>Comparative analysis of the genome sequences of Bordetella pertussis, Bordetella parapertussis and Bordetella bronchiseptica.</title>
        <authorList>
            <person name="Parkhill J."/>
            <person name="Sebaihia M."/>
            <person name="Preston A."/>
            <person name="Murphy L.D."/>
            <person name="Thomson N.R."/>
            <person name="Harris D.E."/>
            <person name="Holden M.T.G."/>
            <person name="Churcher C.M."/>
            <person name="Bentley S.D."/>
            <person name="Mungall K.L."/>
            <person name="Cerdeno-Tarraga A.-M."/>
            <person name="Temple L."/>
            <person name="James K.D."/>
            <person name="Harris B."/>
            <person name="Quail M.A."/>
            <person name="Achtman M."/>
            <person name="Atkin R."/>
            <person name="Baker S."/>
            <person name="Basham D."/>
            <person name="Bason N."/>
            <person name="Cherevach I."/>
            <person name="Chillingworth T."/>
            <person name="Collins M."/>
            <person name="Cronin A."/>
            <person name="Davis P."/>
            <person name="Doggett J."/>
            <person name="Feltwell T."/>
            <person name="Goble A."/>
            <person name="Hamlin N."/>
            <person name="Hauser H."/>
            <person name="Holroyd S."/>
            <person name="Jagels K."/>
            <person name="Leather S."/>
            <person name="Moule S."/>
            <person name="Norberczak H."/>
            <person name="O'Neil S."/>
            <person name="Ormond D."/>
            <person name="Price C."/>
            <person name="Rabbinowitsch E."/>
            <person name="Rutter S."/>
            <person name="Sanders M."/>
            <person name="Saunders D."/>
            <person name="Seeger K."/>
            <person name="Sharp S."/>
            <person name="Simmonds M."/>
            <person name="Skelton J."/>
            <person name="Squares R."/>
            <person name="Squares S."/>
            <person name="Stevens K."/>
            <person name="Unwin L."/>
            <person name="Whitehead S."/>
            <person name="Barrell B.G."/>
            <person name="Maskell D.J."/>
        </authorList>
    </citation>
    <scope>NUCLEOTIDE SEQUENCE [LARGE SCALE GENOMIC DNA]</scope>
    <source>
        <strain>ATCC BAA-588 / NCTC 13252 / RB50</strain>
    </source>
</reference>
<keyword id="KW-0687">Ribonucleoprotein</keyword>
<keyword id="KW-0689">Ribosomal protein</keyword>
<keyword id="KW-0694">RNA-binding</keyword>
<keyword id="KW-0699">rRNA-binding</keyword>
<gene>
    <name evidence="1" type="primary">rpsS</name>
    <name type="ordered locus">BB0033</name>
</gene>
<sequence>MSRSIKKGPFVDAHLIKKVDAAVAGKDKKPIKTWSRRSTVLPEFIGLTIAVHNGRQHVPVYINENMVGHKLGEFALTRTFKGHAADKKSKR</sequence>
<proteinExistence type="inferred from homology"/>
<accession>Q7WRC1</accession>
<dbReference type="EMBL" id="BX640437">
    <property type="protein sequence ID" value="CAE30535.1"/>
    <property type="molecule type" value="Genomic_DNA"/>
</dbReference>
<dbReference type="RefSeq" id="WP_003806908.1">
    <property type="nucleotide sequence ID" value="NC_002927.3"/>
</dbReference>
<dbReference type="SMR" id="Q7WRC1"/>
<dbReference type="GeneID" id="93206262"/>
<dbReference type="KEGG" id="bbr:BB0033"/>
<dbReference type="eggNOG" id="COG0185">
    <property type="taxonomic scope" value="Bacteria"/>
</dbReference>
<dbReference type="HOGENOM" id="CLU_144911_0_1_4"/>
<dbReference type="Proteomes" id="UP000001027">
    <property type="component" value="Chromosome"/>
</dbReference>
<dbReference type="GO" id="GO:0005737">
    <property type="term" value="C:cytoplasm"/>
    <property type="evidence" value="ECO:0007669"/>
    <property type="project" value="UniProtKB-ARBA"/>
</dbReference>
<dbReference type="GO" id="GO:0015935">
    <property type="term" value="C:small ribosomal subunit"/>
    <property type="evidence" value="ECO:0007669"/>
    <property type="project" value="InterPro"/>
</dbReference>
<dbReference type="GO" id="GO:0019843">
    <property type="term" value="F:rRNA binding"/>
    <property type="evidence" value="ECO:0007669"/>
    <property type="project" value="UniProtKB-UniRule"/>
</dbReference>
<dbReference type="GO" id="GO:0003735">
    <property type="term" value="F:structural constituent of ribosome"/>
    <property type="evidence" value="ECO:0007669"/>
    <property type="project" value="InterPro"/>
</dbReference>
<dbReference type="GO" id="GO:0000028">
    <property type="term" value="P:ribosomal small subunit assembly"/>
    <property type="evidence" value="ECO:0007669"/>
    <property type="project" value="TreeGrafter"/>
</dbReference>
<dbReference type="GO" id="GO:0006412">
    <property type="term" value="P:translation"/>
    <property type="evidence" value="ECO:0007669"/>
    <property type="project" value="UniProtKB-UniRule"/>
</dbReference>
<dbReference type="FunFam" id="3.30.860.10:FF:000001">
    <property type="entry name" value="30S ribosomal protein S19"/>
    <property type="match status" value="1"/>
</dbReference>
<dbReference type="Gene3D" id="3.30.860.10">
    <property type="entry name" value="30s Ribosomal Protein S19, Chain A"/>
    <property type="match status" value="1"/>
</dbReference>
<dbReference type="HAMAP" id="MF_00531">
    <property type="entry name" value="Ribosomal_uS19"/>
    <property type="match status" value="1"/>
</dbReference>
<dbReference type="InterPro" id="IPR002222">
    <property type="entry name" value="Ribosomal_uS19"/>
</dbReference>
<dbReference type="InterPro" id="IPR005732">
    <property type="entry name" value="Ribosomal_uS19_bac-type"/>
</dbReference>
<dbReference type="InterPro" id="IPR020934">
    <property type="entry name" value="Ribosomal_uS19_CS"/>
</dbReference>
<dbReference type="InterPro" id="IPR023575">
    <property type="entry name" value="Ribosomal_uS19_SF"/>
</dbReference>
<dbReference type="NCBIfam" id="TIGR01050">
    <property type="entry name" value="rpsS_bact"/>
    <property type="match status" value="1"/>
</dbReference>
<dbReference type="PANTHER" id="PTHR11880">
    <property type="entry name" value="RIBOSOMAL PROTEIN S19P FAMILY MEMBER"/>
    <property type="match status" value="1"/>
</dbReference>
<dbReference type="PANTHER" id="PTHR11880:SF8">
    <property type="entry name" value="SMALL RIBOSOMAL SUBUNIT PROTEIN US19M"/>
    <property type="match status" value="1"/>
</dbReference>
<dbReference type="Pfam" id="PF00203">
    <property type="entry name" value="Ribosomal_S19"/>
    <property type="match status" value="1"/>
</dbReference>
<dbReference type="PIRSF" id="PIRSF002144">
    <property type="entry name" value="Ribosomal_S19"/>
    <property type="match status" value="1"/>
</dbReference>
<dbReference type="PRINTS" id="PR00975">
    <property type="entry name" value="RIBOSOMALS19"/>
</dbReference>
<dbReference type="SUPFAM" id="SSF54570">
    <property type="entry name" value="Ribosomal protein S19"/>
    <property type="match status" value="1"/>
</dbReference>
<dbReference type="PROSITE" id="PS00323">
    <property type="entry name" value="RIBOSOMAL_S19"/>
    <property type="match status" value="1"/>
</dbReference>
<evidence type="ECO:0000255" key="1">
    <source>
        <dbReference type="HAMAP-Rule" id="MF_00531"/>
    </source>
</evidence>
<evidence type="ECO:0000305" key="2"/>
<name>RS19_BORBR</name>
<organism>
    <name type="scientific">Bordetella bronchiseptica (strain ATCC BAA-588 / NCTC 13252 / RB50)</name>
    <name type="common">Alcaligenes bronchisepticus</name>
    <dbReference type="NCBI Taxonomy" id="257310"/>
    <lineage>
        <taxon>Bacteria</taxon>
        <taxon>Pseudomonadati</taxon>
        <taxon>Pseudomonadota</taxon>
        <taxon>Betaproteobacteria</taxon>
        <taxon>Burkholderiales</taxon>
        <taxon>Alcaligenaceae</taxon>
        <taxon>Bordetella</taxon>
    </lineage>
</organism>
<protein>
    <recommendedName>
        <fullName evidence="1">Small ribosomal subunit protein uS19</fullName>
    </recommendedName>
    <alternativeName>
        <fullName evidence="2">30S ribosomal protein S19</fullName>
    </alternativeName>
</protein>
<comment type="function">
    <text evidence="1">Protein S19 forms a complex with S13 that binds strongly to the 16S ribosomal RNA.</text>
</comment>
<comment type="similarity">
    <text evidence="1">Belongs to the universal ribosomal protein uS19 family.</text>
</comment>
<feature type="chain" id="PRO_0000129786" description="Small ribosomal subunit protein uS19">
    <location>
        <begin position="1"/>
        <end position="91"/>
    </location>
</feature>